<reference key="1">
    <citation type="journal article" date="1998" name="Nature">
        <title>Deciphering the biology of Mycobacterium tuberculosis from the complete genome sequence.</title>
        <authorList>
            <person name="Cole S.T."/>
            <person name="Brosch R."/>
            <person name="Parkhill J."/>
            <person name="Garnier T."/>
            <person name="Churcher C.M."/>
            <person name="Harris D.E."/>
            <person name="Gordon S.V."/>
            <person name="Eiglmeier K."/>
            <person name="Gas S."/>
            <person name="Barry C.E. III"/>
            <person name="Tekaia F."/>
            <person name="Badcock K."/>
            <person name="Basham D."/>
            <person name="Brown D."/>
            <person name="Chillingworth T."/>
            <person name="Connor R."/>
            <person name="Davies R.M."/>
            <person name="Devlin K."/>
            <person name="Feltwell T."/>
            <person name="Gentles S."/>
            <person name="Hamlin N."/>
            <person name="Holroyd S."/>
            <person name="Hornsby T."/>
            <person name="Jagels K."/>
            <person name="Krogh A."/>
            <person name="McLean J."/>
            <person name="Moule S."/>
            <person name="Murphy L.D."/>
            <person name="Oliver S."/>
            <person name="Osborne J."/>
            <person name="Quail M.A."/>
            <person name="Rajandream M.A."/>
            <person name="Rogers J."/>
            <person name="Rutter S."/>
            <person name="Seeger K."/>
            <person name="Skelton S."/>
            <person name="Squares S."/>
            <person name="Squares R."/>
            <person name="Sulston J.E."/>
            <person name="Taylor K."/>
            <person name="Whitehead S."/>
            <person name="Barrell B.G."/>
        </authorList>
    </citation>
    <scope>NUCLEOTIDE SEQUENCE [LARGE SCALE GENOMIC DNA]</scope>
    <source>
        <strain>ATCC 25618 / H37Rv</strain>
    </source>
</reference>
<reference key="2">
    <citation type="journal article" date="2008" name="BMC Syst. Biol.">
        <title>targetTB: a target identification pipeline for Mycobacterium tuberculosis through an interactome, reactome and genome-scale structural analysis.</title>
        <authorList>
            <person name="Raman K."/>
            <person name="Yeturu K."/>
            <person name="Chandra N."/>
        </authorList>
    </citation>
    <scope>IDENTIFICATION AS A DRUG TARGET [LARGE SCALE ANALYSIS]</scope>
</reference>
<name>PIT_MYCTU</name>
<sequence>MNLQLFLLLIVVVTALAFDFTNGFHDTGNAMATSIASGALAPRVAVALPAVLNLIGAFLSTAVAATIAKGLIDANLVTLELVFAGLVGGIVWNLLTWLLGIPSSSSHALIGGIVGATIAAVGLRGVIWSGVVSKVIVPAVVAALLATLVGAVGTWLVYRTTRGVAEKRTERGFRRGQIGSASLVSLAHGTNDAQKTMGVIFLALMSYGAVSTTASVPPLWVIVSCAVAMAAGTYLGGWRIIRTLGKGLVEIKPPQGMAAESSSAAVILLSAHFGYALSTTQVATGSVLGSGVGKPGAEVRWGVAGRMVVAWLVTLPLAGLVGAFTYGLVHFIGGYPGAILGFALLWLTATAIWLRSRRAPIDHTNVNADWEGNLTAGLEAGAQPLADQRPPVPAPPAPTPPPNHRAPQFGVTTRNAP</sequence>
<feature type="chain" id="PRO_0000080792" description="Probable low-affinity inorganic phosphate transporter">
    <location>
        <begin position="1"/>
        <end position="417"/>
    </location>
</feature>
<feature type="transmembrane region" description="Helical" evidence="2">
    <location>
        <begin position="5"/>
        <end position="25"/>
    </location>
</feature>
<feature type="transmembrane region" description="Helical" evidence="2">
    <location>
        <begin position="44"/>
        <end position="64"/>
    </location>
</feature>
<feature type="transmembrane region" description="Helical" evidence="2">
    <location>
        <begin position="81"/>
        <end position="101"/>
    </location>
</feature>
<feature type="transmembrane region" description="Helical" evidence="2">
    <location>
        <begin position="108"/>
        <end position="128"/>
    </location>
</feature>
<feature type="transmembrane region" description="Helical" evidence="2">
    <location>
        <begin position="135"/>
        <end position="155"/>
    </location>
</feature>
<feature type="transmembrane region" description="Helical" evidence="2">
    <location>
        <begin position="218"/>
        <end position="238"/>
    </location>
</feature>
<feature type="transmembrane region" description="Helical" evidence="2">
    <location>
        <begin position="327"/>
        <end position="347"/>
    </location>
</feature>
<feature type="region of interest" description="Disordered" evidence="3">
    <location>
        <begin position="379"/>
        <end position="417"/>
    </location>
</feature>
<feature type="compositionally biased region" description="Pro residues" evidence="3">
    <location>
        <begin position="390"/>
        <end position="404"/>
    </location>
</feature>
<proteinExistence type="inferred from homology"/>
<accession>P9WIA7</accession>
<accession>L0T6T9</accession>
<accession>O06411</accession>
<gene>
    <name type="primary">pit</name>
    <name type="synonym">pitA</name>
    <name type="ordered locus">Rv0545c</name>
    <name type="ORF">MTCY25D10.24c</name>
</gene>
<protein>
    <recommendedName>
        <fullName>Probable low-affinity inorganic phosphate transporter</fullName>
    </recommendedName>
</protein>
<organism>
    <name type="scientific">Mycobacterium tuberculosis (strain ATCC 25618 / H37Rv)</name>
    <dbReference type="NCBI Taxonomy" id="83332"/>
    <lineage>
        <taxon>Bacteria</taxon>
        <taxon>Bacillati</taxon>
        <taxon>Actinomycetota</taxon>
        <taxon>Actinomycetes</taxon>
        <taxon>Mycobacteriales</taxon>
        <taxon>Mycobacteriaceae</taxon>
        <taxon>Mycobacterium</taxon>
        <taxon>Mycobacterium tuberculosis complex</taxon>
    </lineage>
</organism>
<dbReference type="EMBL" id="AL123456">
    <property type="protein sequence ID" value="CCP43283.1"/>
    <property type="molecule type" value="Genomic_DNA"/>
</dbReference>
<dbReference type="PIR" id="D70547">
    <property type="entry name" value="D70547"/>
</dbReference>
<dbReference type="RefSeq" id="NP_215059.1">
    <property type="nucleotide sequence ID" value="NC_000962.3"/>
</dbReference>
<dbReference type="RefSeq" id="WP_003911224.1">
    <property type="nucleotide sequence ID" value="NZ_NVQJ01000036.1"/>
</dbReference>
<dbReference type="SMR" id="P9WIA7"/>
<dbReference type="FunCoup" id="P9WIA7">
    <property type="interactions" value="14"/>
</dbReference>
<dbReference type="STRING" id="83332.Rv0545c"/>
<dbReference type="PaxDb" id="83332-Rv0545c"/>
<dbReference type="DNASU" id="887517"/>
<dbReference type="GeneID" id="887517"/>
<dbReference type="KEGG" id="mtu:Rv0545c"/>
<dbReference type="KEGG" id="mtv:RVBD_0545c"/>
<dbReference type="TubercuList" id="Rv0545c"/>
<dbReference type="eggNOG" id="COG0306">
    <property type="taxonomic scope" value="Bacteria"/>
</dbReference>
<dbReference type="InParanoid" id="P9WIA7"/>
<dbReference type="OrthoDB" id="9779554at2"/>
<dbReference type="PhylomeDB" id="P9WIA7"/>
<dbReference type="Proteomes" id="UP000001584">
    <property type="component" value="Chromosome"/>
</dbReference>
<dbReference type="GO" id="GO:0005886">
    <property type="term" value="C:plasma membrane"/>
    <property type="evidence" value="ECO:0007669"/>
    <property type="project" value="UniProtKB-SubCell"/>
</dbReference>
<dbReference type="GO" id="GO:0005315">
    <property type="term" value="F:phosphate transmembrane transporter activity"/>
    <property type="evidence" value="ECO:0000318"/>
    <property type="project" value="GO_Central"/>
</dbReference>
<dbReference type="GO" id="GO:0015293">
    <property type="term" value="F:symporter activity"/>
    <property type="evidence" value="ECO:0007669"/>
    <property type="project" value="UniProtKB-KW"/>
</dbReference>
<dbReference type="GO" id="GO:0035435">
    <property type="term" value="P:phosphate ion transmembrane transport"/>
    <property type="evidence" value="ECO:0000318"/>
    <property type="project" value="GO_Central"/>
</dbReference>
<dbReference type="InterPro" id="IPR001204">
    <property type="entry name" value="Phos_transporter"/>
</dbReference>
<dbReference type="PANTHER" id="PTHR11101:SF54">
    <property type="entry name" value="LOW-AFFINITY INORGANIC PHOSPHATE TRANSPORTER-RELATED"/>
    <property type="match status" value="1"/>
</dbReference>
<dbReference type="PANTHER" id="PTHR11101">
    <property type="entry name" value="PHOSPHATE TRANSPORTER"/>
    <property type="match status" value="1"/>
</dbReference>
<dbReference type="Pfam" id="PF01384">
    <property type="entry name" value="PHO4"/>
    <property type="match status" value="1"/>
</dbReference>
<evidence type="ECO:0000250" key="1">
    <source>
        <dbReference type="UniProtKB" id="P0AFJ7"/>
    </source>
</evidence>
<evidence type="ECO:0000255" key="2"/>
<evidence type="ECO:0000256" key="3">
    <source>
        <dbReference type="SAM" id="MobiDB-lite"/>
    </source>
</evidence>
<evidence type="ECO:0000269" key="4">
    <source>
    </source>
</evidence>
<evidence type="ECO:0000305" key="5"/>
<keyword id="KW-1003">Cell membrane</keyword>
<keyword id="KW-0472">Membrane</keyword>
<keyword id="KW-0592">Phosphate transport</keyword>
<keyword id="KW-1185">Reference proteome</keyword>
<keyword id="KW-0769">Symport</keyword>
<keyword id="KW-0812">Transmembrane</keyword>
<keyword id="KW-1133">Transmembrane helix</keyword>
<keyword id="KW-0813">Transport</keyword>
<comment type="function">
    <text evidence="1">Low-affinity inorganic phosphate transporter.</text>
</comment>
<comment type="catalytic activity">
    <reaction evidence="1">
        <text>phosphate(in) + H(+)(in) = phosphate(out) + H(+)(out)</text>
        <dbReference type="Rhea" id="RHEA:29939"/>
        <dbReference type="ChEBI" id="CHEBI:15378"/>
        <dbReference type="ChEBI" id="CHEBI:43474"/>
    </reaction>
</comment>
<comment type="subcellular location">
    <subcellularLocation>
        <location evidence="5">Cell membrane</location>
        <topology evidence="2">Multi-pass membrane protein</topology>
    </subcellularLocation>
</comment>
<comment type="miscellaneous">
    <text evidence="4">Was identified as a high-confidence drug target.</text>
</comment>
<comment type="similarity">
    <text evidence="5">Belongs to the inorganic phosphate transporter (PiT) (TC 2.A.20) family. Pit subfamily.</text>
</comment>